<protein>
    <recommendedName>
        <fullName evidence="1">NADPH-dependent 7-cyano-7-deazaguanine reductase</fullName>
        <ecNumber evidence="1">1.7.1.13</ecNumber>
    </recommendedName>
    <alternativeName>
        <fullName evidence="1">7-cyano-7-carbaguanine reductase</fullName>
    </alternativeName>
    <alternativeName>
        <fullName evidence="1">NADPH-dependent nitrile oxidoreductase</fullName>
    </alternativeName>
    <alternativeName>
        <fullName evidence="1">PreQ(0) reductase</fullName>
    </alternativeName>
</protein>
<sequence length="116" mass="13410">MKPELLETFENQYPNRDYTIEIVNPEFTSVCPKTGLPDFGTITLQYIPNKLCVELKSLKYYYLEFRNAGIFYENVTNKILDDLVKAVKPKEMKIISEWKARGGITTTVTASYEAEK</sequence>
<organism>
    <name type="scientific">Chloroherpeton thalassium (strain ATCC 35110 / GB-78)</name>
    <dbReference type="NCBI Taxonomy" id="517418"/>
    <lineage>
        <taxon>Bacteria</taxon>
        <taxon>Pseudomonadati</taxon>
        <taxon>Chlorobiota</taxon>
        <taxon>Chlorobiia</taxon>
        <taxon>Chlorobiales</taxon>
        <taxon>Chloroherpetonaceae</taxon>
        <taxon>Chloroherpeton</taxon>
    </lineage>
</organism>
<accession>B3QYB6</accession>
<comment type="function">
    <text evidence="1">Catalyzes the NADPH-dependent reduction of 7-cyano-7-deazaguanine (preQ0) to 7-aminomethyl-7-deazaguanine (preQ1).</text>
</comment>
<comment type="catalytic activity">
    <reaction evidence="1">
        <text>7-aminomethyl-7-carbaguanine + 2 NADP(+) = 7-cyano-7-deazaguanine + 2 NADPH + 3 H(+)</text>
        <dbReference type="Rhea" id="RHEA:13409"/>
        <dbReference type="ChEBI" id="CHEBI:15378"/>
        <dbReference type="ChEBI" id="CHEBI:45075"/>
        <dbReference type="ChEBI" id="CHEBI:57783"/>
        <dbReference type="ChEBI" id="CHEBI:58349"/>
        <dbReference type="ChEBI" id="CHEBI:58703"/>
        <dbReference type="EC" id="1.7.1.13"/>
    </reaction>
</comment>
<comment type="pathway">
    <text evidence="1">tRNA modification; tRNA-queuosine biosynthesis.</text>
</comment>
<comment type="subcellular location">
    <subcellularLocation>
        <location evidence="1">Cytoplasm</location>
    </subcellularLocation>
</comment>
<comment type="similarity">
    <text evidence="1">Belongs to the GTP cyclohydrolase I family. QueF type 1 subfamily.</text>
</comment>
<evidence type="ECO:0000255" key="1">
    <source>
        <dbReference type="HAMAP-Rule" id="MF_00818"/>
    </source>
</evidence>
<keyword id="KW-0963">Cytoplasm</keyword>
<keyword id="KW-0521">NADP</keyword>
<keyword id="KW-0560">Oxidoreductase</keyword>
<keyword id="KW-0671">Queuosine biosynthesis</keyword>
<keyword id="KW-1185">Reference proteome</keyword>
<feature type="chain" id="PRO_1000134300" description="NADPH-dependent 7-cyano-7-deazaguanine reductase">
    <location>
        <begin position="1"/>
        <end position="116"/>
    </location>
</feature>
<feature type="active site" description="Thioimide intermediate" evidence="1">
    <location>
        <position position="31"/>
    </location>
</feature>
<feature type="active site" description="Proton donor" evidence="1">
    <location>
        <position position="38"/>
    </location>
</feature>
<feature type="binding site" evidence="1">
    <location>
        <begin position="53"/>
        <end position="55"/>
    </location>
    <ligand>
        <name>substrate</name>
    </ligand>
</feature>
<feature type="binding site" evidence="1">
    <location>
        <begin position="72"/>
        <end position="73"/>
    </location>
    <ligand>
        <name>substrate</name>
    </ligand>
</feature>
<gene>
    <name evidence="1" type="primary">queF</name>
    <name type="ordered locus">Ctha_2633</name>
</gene>
<name>QUEF_CHLT3</name>
<proteinExistence type="inferred from homology"/>
<reference key="1">
    <citation type="submission" date="2008-06" db="EMBL/GenBank/DDBJ databases">
        <title>Complete sequence of Chloroherpeton thalassium ATCC 35110.</title>
        <authorList>
            <consortium name="US DOE Joint Genome Institute"/>
            <person name="Lucas S."/>
            <person name="Copeland A."/>
            <person name="Lapidus A."/>
            <person name="Glavina del Rio T."/>
            <person name="Dalin E."/>
            <person name="Tice H."/>
            <person name="Bruce D."/>
            <person name="Goodwin L."/>
            <person name="Pitluck S."/>
            <person name="Schmutz J."/>
            <person name="Larimer F."/>
            <person name="Land M."/>
            <person name="Hauser L."/>
            <person name="Kyrpides N."/>
            <person name="Mikhailova N."/>
            <person name="Liu Z."/>
            <person name="Li T."/>
            <person name="Zhao F."/>
            <person name="Overmann J."/>
            <person name="Bryant D.A."/>
            <person name="Richardson P."/>
        </authorList>
    </citation>
    <scope>NUCLEOTIDE SEQUENCE [LARGE SCALE GENOMIC DNA]</scope>
    <source>
        <strain>ATCC 35110 / GB-78</strain>
    </source>
</reference>
<dbReference type="EC" id="1.7.1.13" evidence="1"/>
<dbReference type="EMBL" id="CP001100">
    <property type="protein sequence ID" value="ACF15082.1"/>
    <property type="molecule type" value="Genomic_DNA"/>
</dbReference>
<dbReference type="RefSeq" id="WP_012501164.1">
    <property type="nucleotide sequence ID" value="NC_011026.1"/>
</dbReference>
<dbReference type="SMR" id="B3QYB6"/>
<dbReference type="STRING" id="517418.Ctha_2633"/>
<dbReference type="KEGG" id="cts:Ctha_2633"/>
<dbReference type="eggNOG" id="COG0780">
    <property type="taxonomic scope" value="Bacteria"/>
</dbReference>
<dbReference type="HOGENOM" id="CLU_102489_1_0_10"/>
<dbReference type="OrthoDB" id="9795077at2"/>
<dbReference type="UniPathway" id="UPA00392"/>
<dbReference type="Proteomes" id="UP000001208">
    <property type="component" value="Chromosome"/>
</dbReference>
<dbReference type="GO" id="GO:0005737">
    <property type="term" value="C:cytoplasm"/>
    <property type="evidence" value="ECO:0007669"/>
    <property type="project" value="UniProtKB-SubCell"/>
</dbReference>
<dbReference type="GO" id="GO:0033739">
    <property type="term" value="F:preQ1 synthase activity"/>
    <property type="evidence" value="ECO:0007669"/>
    <property type="project" value="UniProtKB-UniRule"/>
</dbReference>
<dbReference type="GO" id="GO:0008616">
    <property type="term" value="P:queuosine biosynthetic process"/>
    <property type="evidence" value="ECO:0007669"/>
    <property type="project" value="UniProtKB-UniRule"/>
</dbReference>
<dbReference type="GO" id="GO:0006400">
    <property type="term" value="P:tRNA modification"/>
    <property type="evidence" value="ECO:0007669"/>
    <property type="project" value="UniProtKB-UniRule"/>
</dbReference>
<dbReference type="Gene3D" id="3.30.1130.10">
    <property type="match status" value="1"/>
</dbReference>
<dbReference type="HAMAP" id="MF_00818">
    <property type="entry name" value="QueF_type1"/>
    <property type="match status" value="1"/>
</dbReference>
<dbReference type="InterPro" id="IPR043133">
    <property type="entry name" value="GTP-CH-I_C/QueF"/>
</dbReference>
<dbReference type="InterPro" id="IPR050084">
    <property type="entry name" value="NADPH_dep_7-cyano-7-deazaG_red"/>
</dbReference>
<dbReference type="InterPro" id="IPR029500">
    <property type="entry name" value="QueF"/>
</dbReference>
<dbReference type="InterPro" id="IPR016856">
    <property type="entry name" value="QueF_type1"/>
</dbReference>
<dbReference type="NCBIfam" id="TIGR03139">
    <property type="entry name" value="QueF-II"/>
    <property type="match status" value="1"/>
</dbReference>
<dbReference type="PANTHER" id="PTHR34354">
    <property type="entry name" value="NADPH-DEPENDENT 7-CYANO-7-DEAZAGUANINE REDUCTASE"/>
    <property type="match status" value="1"/>
</dbReference>
<dbReference type="PANTHER" id="PTHR34354:SF1">
    <property type="entry name" value="NADPH-DEPENDENT 7-CYANO-7-DEAZAGUANINE REDUCTASE"/>
    <property type="match status" value="1"/>
</dbReference>
<dbReference type="Pfam" id="PF14489">
    <property type="entry name" value="QueF"/>
    <property type="match status" value="1"/>
</dbReference>
<dbReference type="PIRSF" id="PIRSF027377">
    <property type="entry name" value="Nitrile_oxidored_QueF"/>
    <property type="match status" value="1"/>
</dbReference>
<dbReference type="SUPFAM" id="SSF55620">
    <property type="entry name" value="Tetrahydrobiopterin biosynthesis enzymes-like"/>
    <property type="match status" value="1"/>
</dbReference>